<gene>
    <name evidence="17" type="primary">lim-6</name>
    <name evidence="17" type="ORF">K03E6.1</name>
</gene>
<proteinExistence type="evidence at protein level"/>
<comment type="function">
    <text evidence="1 6 7 8 9 10 11">Transcription factor (By similarity). Required for the terminal differentiation of sensory- and motor-neurons, especially GABAergic neurons, and for morphological aspects of uterine development (PubMed:10068647). Plays a role in the cell-type-specific regulation of glutamic acid decarboxylase unc-25 (PubMed:10068647). Involved in promoting sleep-like behavioral quiescence, acting by modulating expression of transcription factor aptf-1 in the single sleep-active ring interneuron RIS (PubMed:26949257). Plays a role in regulation of RIS differentiation (PubMed:14568548). Required for the functional asymmetry of the ASER and ASEL chemosensory neuron pair, conferring the ability to discriminate sodium from chloride, perhaps by modulating expression of receptor-type guanylate cyclases, such as gcy-5 (PubMed:11287956, PubMed:21555395). Involved in regulating postembryonic axon maintenance in the ventral nerve cord, acting in concert with LIM homeobox protein ceh-14, via modulation of expression of immunoglobulin domain zig genes in the interneuron PVT (PubMed:12490565). May play a role in the functions of the excretory gland cell (PubMed:10068647).</text>
</comment>
<comment type="subcellular location">
    <subcellularLocation>
        <location evidence="2 4">Nucleus</location>
    </subcellularLocation>
</comment>
<comment type="alternative products">
    <event type="alternative splicing"/>
    <isoform>
        <id>Q21192-1</id>
        <name evidence="17">b</name>
        <sequence type="displayed"/>
    </isoform>
    <isoform>
        <id>Q21192-2</id>
        <name evidence="16">a</name>
        <sequence type="described" ref="VSP_061398"/>
    </isoform>
</comment>
<comment type="developmental stage">
    <text evidence="6 8">Expressed in a restricted set of neurons, and epithelial cells of the uterus and the excretory system, late in embryogenesis at about 300 minutes of development (PubMed:10068647). Expression in neurons continues throughout adulthood (PubMed:10068647). Expressed asymmetrically, only in the left neuron (ASEL), of the ASER and ASEL chemosensory pair (PubMed:10068647). Expressed in the interneuron PVT during embryogenesis (PubMed:12490565).</text>
</comment>
<sequence length="316" mass="36507">MERDCDIVDLDQPSLGTVISIKDGSTPTDISTTSSTTEDKLCSGCGCLIKDRYIYRVMEDSYHESCLRCSCCQLSLSSFKKCFSRHGNIYCEHDHQMLYGKRCRRCMTLLLPTDIVHRVHFMYYHAQCFSCCSCQRPFNLGDEYHVFDGEVFCRNDYQSICNFQTISNPDPLMEEVVRSEIHRKTPKRPRTILNAQQRRQFKTAFERSSKPSRKVREQLANETGLSVRVVQVWFQNQRAKIKKLNKKDSDSGDTFKHGPGSEGRSTEDIRSSDDEEESVINLDADEVETSETSSYTDPIQKLYNMTSSQIYFPYHS</sequence>
<evidence type="ECO:0000250" key="1">
    <source>
        <dbReference type="UniProtKB" id="O60663"/>
    </source>
</evidence>
<evidence type="ECO:0000255" key="2">
    <source>
        <dbReference type="PROSITE-ProRule" id="PRU00108"/>
    </source>
</evidence>
<evidence type="ECO:0000255" key="3">
    <source>
        <dbReference type="PROSITE-ProRule" id="PRU00125"/>
    </source>
</evidence>
<evidence type="ECO:0000255" key="4">
    <source>
        <dbReference type="RuleBase" id="RU000682"/>
    </source>
</evidence>
<evidence type="ECO:0000256" key="5">
    <source>
        <dbReference type="SAM" id="MobiDB-lite"/>
    </source>
</evidence>
<evidence type="ECO:0000269" key="6">
    <source>
    </source>
</evidence>
<evidence type="ECO:0000269" key="7">
    <source>
    </source>
</evidence>
<evidence type="ECO:0000269" key="8">
    <source>
    </source>
</evidence>
<evidence type="ECO:0000269" key="9">
    <source>
    </source>
</evidence>
<evidence type="ECO:0000269" key="10">
    <source>
    </source>
</evidence>
<evidence type="ECO:0000269" key="11">
    <source>
    </source>
</evidence>
<evidence type="ECO:0000303" key="12">
    <source>
    </source>
</evidence>
<evidence type="ECO:0000305" key="13"/>
<evidence type="ECO:0000312" key="14">
    <source>
        <dbReference type="EMBL" id="AAD12189.1"/>
    </source>
</evidence>
<evidence type="ECO:0000312" key="15">
    <source>
        <dbReference type="Proteomes" id="UP000001940"/>
    </source>
</evidence>
<evidence type="ECO:0000312" key="16">
    <source>
        <dbReference type="WormBase" id="K03E6.1a"/>
    </source>
</evidence>
<evidence type="ECO:0000312" key="17">
    <source>
        <dbReference type="WormBase" id="K03E6.1b"/>
    </source>
</evidence>
<feature type="chain" id="PRO_0000454830" description="LIM/homeobox protein lim-6">
    <location>
        <begin position="1"/>
        <end position="316"/>
    </location>
</feature>
<feature type="domain" description="LIM zinc-binding 1" evidence="3">
    <location>
        <begin position="40"/>
        <end position="101"/>
    </location>
</feature>
<feature type="domain" description="LIM zinc-binding 2" evidence="3">
    <location>
        <begin position="102"/>
        <end position="163"/>
    </location>
</feature>
<feature type="DNA-binding region" description="Homeobox" evidence="2">
    <location>
        <begin position="186"/>
        <end position="245"/>
    </location>
</feature>
<feature type="region of interest" description="Disordered" evidence="5">
    <location>
        <begin position="244"/>
        <end position="297"/>
    </location>
</feature>
<feature type="compositionally biased region" description="Basic and acidic residues" evidence="5">
    <location>
        <begin position="246"/>
        <end position="256"/>
    </location>
</feature>
<feature type="compositionally biased region" description="Acidic residues" evidence="5">
    <location>
        <begin position="273"/>
        <end position="289"/>
    </location>
</feature>
<feature type="splice variant" id="VSP_061398" description="In isoform a." evidence="13">
    <original>NLDADEVETSETSSYTDPIQKLYNMTSSQIYFPYHS</original>
    <variation>SKLKRIGIDIGELWLYKLKSVFQKVRKFVP</variation>
    <location>
        <begin position="281"/>
        <end position="316"/>
    </location>
</feature>
<feature type="mutagenesis site" description="In ot146; Impairs left/right asymmetric gene expression programs of two gustatory neurons, ASEL and ASER. In particular, markers of ASER cell fate, such as receptor-type guanylate cyclase gcy-5, are gained in ASEL, but ASEL fate markers are unaffected." evidence="10">
    <original>C</original>
    <variation>Y</variation>
    <location>
        <position position="106"/>
    </location>
</feature>
<keyword id="KW-0025">Alternative splicing</keyword>
<keyword id="KW-0238">DNA-binding</keyword>
<keyword id="KW-0371">Homeobox</keyword>
<keyword id="KW-0440">LIM domain</keyword>
<keyword id="KW-0479">Metal-binding</keyword>
<keyword id="KW-0539">Nucleus</keyword>
<keyword id="KW-1185">Reference proteome</keyword>
<keyword id="KW-0677">Repeat</keyword>
<keyword id="KW-0862">Zinc</keyword>
<accession>Q21192</accession>
<accession>G4RV72</accession>
<accession>Q94157</accession>
<protein>
    <recommendedName>
        <fullName evidence="12">LIM/homeobox protein lim-6</fullName>
    </recommendedName>
</protein>
<name>LIM6_CAEEL</name>
<organism evidence="15">
    <name type="scientific">Caenorhabditis elegans</name>
    <dbReference type="NCBI Taxonomy" id="6239"/>
    <lineage>
        <taxon>Eukaryota</taxon>
        <taxon>Metazoa</taxon>
        <taxon>Ecdysozoa</taxon>
        <taxon>Nematoda</taxon>
        <taxon>Chromadorea</taxon>
        <taxon>Rhabditida</taxon>
        <taxon>Rhabditina</taxon>
        <taxon>Rhabditomorpha</taxon>
        <taxon>Rhabditoidea</taxon>
        <taxon>Rhabditidae</taxon>
        <taxon>Peloderinae</taxon>
        <taxon>Caenorhabditis</taxon>
    </lineage>
</organism>
<dbReference type="EMBL" id="U72347">
    <property type="protein sequence ID" value="AAD12189.1"/>
    <property type="molecule type" value="mRNA"/>
</dbReference>
<dbReference type="EMBL" id="BX284606">
    <property type="protein sequence ID" value="CCD62867.1"/>
    <property type="molecule type" value="Genomic_DNA"/>
</dbReference>
<dbReference type="EMBL" id="BX284606">
    <property type="protein sequence ID" value="CCD62868.1"/>
    <property type="molecule type" value="Genomic_DNA"/>
</dbReference>
<dbReference type="RefSeq" id="NP_001256980.1">
    <molecule id="Q21192-1"/>
    <property type="nucleotide sequence ID" value="NM_001270051.2"/>
</dbReference>
<dbReference type="RefSeq" id="NP_001256981.1">
    <molecule id="Q21192-2"/>
    <property type="nucleotide sequence ID" value="NM_001270052.2"/>
</dbReference>
<dbReference type="SMR" id="Q21192"/>
<dbReference type="FunCoup" id="Q21192">
    <property type="interactions" value="165"/>
</dbReference>
<dbReference type="IntAct" id="Q21192">
    <property type="interactions" value="1"/>
</dbReference>
<dbReference type="STRING" id="6239.K03E6.1b.1"/>
<dbReference type="PaxDb" id="6239-K03E6.1b"/>
<dbReference type="EnsemblMetazoa" id="K03E6.1a.1">
    <molecule id="Q21192-2"/>
    <property type="protein sequence ID" value="K03E6.1a.1"/>
    <property type="gene ID" value="WBGene00002988"/>
</dbReference>
<dbReference type="EnsemblMetazoa" id="K03E6.1b.1">
    <molecule id="Q21192-1"/>
    <property type="protein sequence ID" value="K03E6.1b.1"/>
    <property type="gene ID" value="WBGene00002988"/>
</dbReference>
<dbReference type="EnsemblMetazoa" id="K03E6.1b.2">
    <molecule id="Q21192-1"/>
    <property type="protein sequence ID" value="K03E6.1b.2"/>
    <property type="gene ID" value="WBGene00002988"/>
</dbReference>
<dbReference type="GeneID" id="180459"/>
<dbReference type="KEGG" id="cel:CELE_K03E6.1"/>
<dbReference type="UCSC" id="K03E6.1">
    <molecule id="Q21192-1"/>
    <property type="organism name" value="c. elegans"/>
</dbReference>
<dbReference type="AGR" id="WB:WBGene00002988"/>
<dbReference type="CTD" id="180459"/>
<dbReference type="WormBase" id="K03E6.1a">
    <molecule id="Q21192-2"/>
    <property type="protein sequence ID" value="CE44857"/>
    <property type="gene ID" value="WBGene00002988"/>
    <property type="gene designation" value="lim-6"/>
</dbReference>
<dbReference type="WormBase" id="K03E6.1b">
    <molecule id="Q21192-1"/>
    <property type="protein sequence ID" value="CE45007"/>
    <property type="gene ID" value="WBGene00002988"/>
    <property type="gene designation" value="lim-6"/>
</dbReference>
<dbReference type="eggNOG" id="KOG0490">
    <property type="taxonomic scope" value="Eukaryota"/>
</dbReference>
<dbReference type="GeneTree" id="ENSGT00940000169507"/>
<dbReference type="HOGENOM" id="CLU_027802_6_0_1"/>
<dbReference type="InParanoid" id="Q21192"/>
<dbReference type="OMA" id="DGLWHEG"/>
<dbReference type="OrthoDB" id="6159439at2759"/>
<dbReference type="PhylomeDB" id="Q21192"/>
<dbReference type="PRO" id="PR:Q21192"/>
<dbReference type="Proteomes" id="UP000001940">
    <property type="component" value="Chromosome X"/>
</dbReference>
<dbReference type="Bgee" id="WBGene00002988">
    <property type="expression patterns" value="Expressed in larva and 3 other cell types or tissues"/>
</dbReference>
<dbReference type="ExpressionAtlas" id="Q21192">
    <property type="expression patterns" value="baseline and differential"/>
</dbReference>
<dbReference type="GO" id="GO:0005634">
    <property type="term" value="C:nucleus"/>
    <property type="evidence" value="ECO:0000314"/>
    <property type="project" value="WormBase"/>
</dbReference>
<dbReference type="GO" id="GO:0003700">
    <property type="term" value="F:DNA-binding transcription factor activity"/>
    <property type="evidence" value="ECO:0000250"/>
    <property type="project" value="WormBase"/>
</dbReference>
<dbReference type="GO" id="GO:0000981">
    <property type="term" value="F:DNA-binding transcription factor activity, RNA polymerase II-specific"/>
    <property type="evidence" value="ECO:0000318"/>
    <property type="project" value="GO_Central"/>
</dbReference>
<dbReference type="GO" id="GO:0046872">
    <property type="term" value="F:metal ion binding"/>
    <property type="evidence" value="ECO:0007669"/>
    <property type="project" value="UniProtKB-KW"/>
</dbReference>
<dbReference type="GO" id="GO:0000977">
    <property type="term" value="F:RNA polymerase II transcription regulatory region sequence-specific DNA binding"/>
    <property type="evidence" value="ECO:0000318"/>
    <property type="project" value="GO_Central"/>
</dbReference>
<dbReference type="GO" id="GO:0007409">
    <property type="term" value="P:axonogenesis"/>
    <property type="evidence" value="ECO:0000315"/>
    <property type="project" value="WormBase"/>
</dbReference>
<dbReference type="GO" id="GO:0030421">
    <property type="term" value="P:defecation"/>
    <property type="evidence" value="ECO:0000315"/>
    <property type="project" value="WormBase"/>
</dbReference>
<dbReference type="GO" id="GO:0050907">
    <property type="term" value="P:detection of chemical stimulus involved in sensory perception"/>
    <property type="evidence" value="ECO:0000315"/>
    <property type="project" value="UniProtKB"/>
</dbReference>
<dbReference type="GO" id="GO:0060756">
    <property type="term" value="P:foraging behavior"/>
    <property type="evidence" value="ECO:0000315"/>
    <property type="project" value="WormBase"/>
</dbReference>
<dbReference type="GO" id="GO:0010629">
    <property type="term" value="P:negative regulation of gene expression"/>
    <property type="evidence" value="ECO:0000315"/>
    <property type="project" value="UniProtKB"/>
</dbReference>
<dbReference type="GO" id="GO:0048666">
    <property type="term" value="P:neuron development"/>
    <property type="evidence" value="ECO:0000315"/>
    <property type="project" value="WormBase"/>
</dbReference>
<dbReference type="GO" id="GO:0030182">
    <property type="term" value="P:neuron differentiation"/>
    <property type="evidence" value="ECO:0000315"/>
    <property type="project" value="UniProtKB"/>
</dbReference>
<dbReference type="GO" id="GO:0010628">
    <property type="term" value="P:positive regulation of gene expression"/>
    <property type="evidence" value="ECO:0000315"/>
    <property type="project" value="UniProtKB"/>
</dbReference>
<dbReference type="GO" id="GO:0045944">
    <property type="term" value="P:positive regulation of transcription by RNA polymerase II"/>
    <property type="evidence" value="ECO:0000315"/>
    <property type="project" value="UniProtKB"/>
</dbReference>
<dbReference type="GO" id="GO:0006355">
    <property type="term" value="P:regulation of DNA-templated transcription"/>
    <property type="evidence" value="ECO:0000315"/>
    <property type="project" value="UniProtKB"/>
</dbReference>
<dbReference type="GO" id="GO:0006357">
    <property type="term" value="P:regulation of transcription by RNA polymerase II"/>
    <property type="evidence" value="ECO:0000318"/>
    <property type="project" value="GO_Central"/>
</dbReference>
<dbReference type="GO" id="GO:0061038">
    <property type="term" value="P:uterus morphogenesis"/>
    <property type="evidence" value="ECO:0000315"/>
    <property type="project" value="WormBase"/>
</dbReference>
<dbReference type="CDD" id="cd00086">
    <property type="entry name" value="homeodomain"/>
    <property type="match status" value="1"/>
</dbReference>
<dbReference type="FunFam" id="2.10.110.10:FF:000136">
    <property type="entry name" value="LIM domain family"/>
    <property type="match status" value="1"/>
</dbReference>
<dbReference type="FunFam" id="2.10.110.10:FF:000178">
    <property type="entry name" value="LIM domain family"/>
    <property type="match status" value="1"/>
</dbReference>
<dbReference type="FunFam" id="1.10.10.60:FF:000448">
    <property type="entry name" value="LIM/homeobox protein Lhx4"/>
    <property type="match status" value="1"/>
</dbReference>
<dbReference type="Gene3D" id="2.10.110.10">
    <property type="entry name" value="Cysteine Rich Protein"/>
    <property type="match status" value="2"/>
</dbReference>
<dbReference type="Gene3D" id="1.10.10.60">
    <property type="entry name" value="Homeodomain-like"/>
    <property type="match status" value="1"/>
</dbReference>
<dbReference type="InterPro" id="IPR001356">
    <property type="entry name" value="HD"/>
</dbReference>
<dbReference type="InterPro" id="IPR017970">
    <property type="entry name" value="Homeobox_CS"/>
</dbReference>
<dbReference type="InterPro" id="IPR009057">
    <property type="entry name" value="Homeodomain-like_sf"/>
</dbReference>
<dbReference type="InterPro" id="IPR050453">
    <property type="entry name" value="LIM_Homeobox_TF"/>
</dbReference>
<dbReference type="InterPro" id="IPR001781">
    <property type="entry name" value="Znf_LIM"/>
</dbReference>
<dbReference type="PANTHER" id="PTHR24208:SF166">
    <property type="entry name" value="LIM HOMEOBOX TRANSCRIPTION FACTOR 1 ALPHA, ISOFORM B"/>
    <property type="match status" value="1"/>
</dbReference>
<dbReference type="PANTHER" id="PTHR24208">
    <property type="entry name" value="LIM/HOMEOBOX PROTEIN LHX"/>
    <property type="match status" value="1"/>
</dbReference>
<dbReference type="Pfam" id="PF00046">
    <property type="entry name" value="Homeodomain"/>
    <property type="match status" value="1"/>
</dbReference>
<dbReference type="Pfam" id="PF00412">
    <property type="entry name" value="LIM"/>
    <property type="match status" value="2"/>
</dbReference>
<dbReference type="SMART" id="SM00389">
    <property type="entry name" value="HOX"/>
    <property type="match status" value="1"/>
</dbReference>
<dbReference type="SMART" id="SM00132">
    <property type="entry name" value="LIM"/>
    <property type="match status" value="2"/>
</dbReference>
<dbReference type="SUPFAM" id="SSF57716">
    <property type="entry name" value="Glucocorticoid receptor-like (DNA-binding domain)"/>
    <property type="match status" value="2"/>
</dbReference>
<dbReference type="SUPFAM" id="SSF46689">
    <property type="entry name" value="Homeodomain-like"/>
    <property type="match status" value="1"/>
</dbReference>
<dbReference type="PROSITE" id="PS00027">
    <property type="entry name" value="HOMEOBOX_1"/>
    <property type="match status" value="1"/>
</dbReference>
<dbReference type="PROSITE" id="PS50071">
    <property type="entry name" value="HOMEOBOX_2"/>
    <property type="match status" value="1"/>
</dbReference>
<dbReference type="PROSITE" id="PS00478">
    <property type="entry name" value="LIM_DOMAIN_1"/>
    <property type="match status" value="2"/>
</dbReference>
<dbReference type="PROSITE" id="PS50023">
    <property type="entry name" value="LIM_DOMAIN_2"/>
    <property type="match status" value="2"/>
</dbReference>
<reference evidence="14" key="1">
    <citation type="journal article" date="1999" name="Development">
        <title>The Caenorhabditis elegans lim-6 LIM homeobox gene regulates neurite outgrowth and function of particular GABAergic neurons.</title>
        <authorList>
            <person name="Hobert O."/>
            <person name="Tessmar K."/>
            <person name="Ruvkun G."/>
        </authorList>
    </citation>
    <scope>NUCLEOTIDE SEQUENCE [MRNA] OF 124-224</scope>
    <scope>FUNCTION</scope>
    <scope>DEVELOPMENTAL STAGE</scope>
</reference>
<reference evidence="15" key="2">
    <citation type="journal article" date="1998" name="Science">
        <title>Genome sequence of the nematode C. elegans: a platform for investigating biology.</title>
        <authorList>
            <consortium name="The C. elegans sequencing consortium"/>
        </authorList>
    </citation>
    <scope>NUCLEOTIDE SEQUENCE [LARGE SCALE GENOMIC DNA]</scope>
    <source>
        <strain evidence="15">Bristol N2</strain>
    </source>
</reference>
<reference evidence="13" key="3">
    <citation type="journal article" date="2001" name="Nature">
        <title>The homeobox gene lim-6 is required for distinct chemosensory representations in C. elegans.</title>
        <authorList>
            <person name="Pierce-Shimomura J.T."/>
            <person name="Faumont S."/>
            <person name="Gaston M.R."/>
            <person name="Pearson B.J."/>
            <person name="Lockery S.R."/>
        </authorList>
    </citation>
    <scope>FUNCTION</scope>
</reference>
<reference evidence="13" key="4">
    <citation type="journal article" date="2003" name="Development">
        <title>Identification of spatial and temporal cues that regulate postembryonic expression of axon maintenance factors in the C. elegans ventral nerve cord.</title>
        <authorList>
            <person name="Aurelio O."/>
            <person name="Boulin T."/>
            <person name="Hobert O."/>
        </authorList>
    </citation>
    <scope>FUNCTION</scope>
    <scope>DEVELOPMENTAL STAGE</scope>
</reference>
<reference evidence="13" key="5">
    <citation type="journal article" date="2003" name="Dev. Biol.">
        <title>LIM homeobox gene-dependent expression of biogenic amine receptors in restricted regions of the C. elegans nervous system.</title>
        <authorList>
            <person name="Tsalik E.L."/>
            <person name="Niacaris T."/>
            <person name="Wenick A.S."/>
            <person name="Pau K."/>
            <person name="Avery L."/>
            <person name="Hobert O."/>
        </authorList>
    </citation>
    <scope>FUNCTION</scope>
</reference>
<reference evidence="13" key="6">
    <citation type="journal article" date="2011" name="Genetics">
        <title>A left/right asymmetric neuronal differentiation program is controlled by the Caenorhabditis elegans lsy-27 zinc-finger transcription factor.</title>
        <authorList>
            <person name="Zhang F."/>
            <person name="O'Meara M.M."/>
            <person name="Hobert O."/>
        </authorList>
    </citation>
    <scope>FUNCTION</scope>
    <scope>MUTAGENESIS OF CYS-106</scope>
</reference>
<reference evidence="13" key="7">
    <citation type="journal article" date="2016" name="Elife">
        <title>Sleep-active neuron specification and sleep induction require FLP-11 neuropeptides to systemically induce sleep.</title>
        <authorList>
            <person name="Turek M."/>
            <person name="Besseling J."/>
            <person name="Spies J.P."/>
            <person name="Koenig S."/>
            <person name="Bringmann H."/>
        </authorList>
    </citation>
    <scope>FUNCTION</scope>
</reference>